<feature type="chain" id="PRO_0000049737" description="Uncharacterized protein YqaB">
    <location>
        <begin position="1"/>
        <end position="172"/>
    </location>
</feature>
<protein>
    <recommendedName>
        <fullName>Uncharacterized protein YqaB</fullName>
    </recommendedName>
</protein>
<dbReference type="EMBL" id="D32216">
    <property type="protein sequence ID" value="BAA06915.1"/>
    <property type="molecule type" value="Genomic_DNA"/>
</dbReference>
<dbReference type="EMBL" id="D84432">
    <property type="protein sequence ID" value="BAA12376.1"/>
    <property type="molecule type" value="Genomic_DNA"/>
</dbReference>
<dbReference type="EMBL" id="AL009126">
    <property type="protein sequence ID" value="CAB14579.1"/>
    <property type="molecule type" value="Genomic_DNA"/>
</dbReference>
<dbReference type="EMBL" id="M19299">
    <property type="status" value="NOT_ANNOTATED_CDS"/>
    <property type="molecule type" value="Genomic_DNA"/>
</dbReference>
<dbReference type="PIR" id="A69944">
    <property type="entry name" value="A69944"/>
</dbReference>
<dbReference type="RefSeq" id="NP_390515.1">
    <property type="nucleotide sequence ID" value="NC_000964.3"/>
</dbReference>
<dbReference type="RefSeq" id="WP_004399097.1">
    <property type="nucleotide sequence ID" value="NZ_OZ025638.1"/>
</dbReference>
<dbReference type="SMR" id="P45899"/>
<dbReference type="FunCoup" id="P45899">
    <property type="interactions" value="25"/>
</dbReference>
<dbReference type="STRING" id="224308.BSU26380"/>
<dbReference type="PaxDb" id="224308-BSU26380"/>
<dbReference type="DNASU" id="937668"/>
<dbReference type="EnsemblBacteria" id="CAB14579">
    <property type="protein sequence ID" value="CAB14579"/>
    <property type="gene ID" value="BSU_26380"/>
</dbReference>
<dbReference type="GeneID" id="937668"/>
<dbReference type="KEGG" id="bsu:BSU26380"/>
<dbReference type="PATRIC" id="fig|224308.179.peg.2866"/>
<dbReference type="eggNOG" id="COG2856">
    <property type="taxonomic scope" value="Bacteria"/>
</dbReference>
<dbReference type="InParanoid" id="P45899"/>
<dbReference type="OrthoDB" id="2417909at2"/>
<dbReference type="PhylomeDB" id="P45899"/>
<dbReference type="BioCyc" id="BSUB:BSU26380-MONOMER"/>
<dbReference type="Proteomes" id="UP000001570">
    <property type="component" value="Chromosome"/>
</dbReference>
<dbReference type="Gene3D" id="1.10.10.2910">
    <property type="match status" value="1"/>
</dbReference>
<dbReference type="InterPro" id="IPR010359">
    <property type="entry name" value="IrrE_HExxH"/>
</dbReference>
<dbReference type="Pfam" id="PF06114">
    <property type="entry name" value="Peptidase_M78"/>
    <property type="match status" value="1"/>
</dbReference>
<keyword id="KW-1185">Reference proteome</keyword>
<reference key="1">
    <citation type="journal article" date="1995" name="Microbiology">
        <title>Complete nucleotide sequence of a skin element excised by DNA rearrangement during sporulation in Bacillus subtilis.</title>
        <authorList>
            <person name="Takemaru K."/>
            <person name="Mizuno M."/>
            <person name="Sato T."/>
            <person name="Takeuchi M."/>
            <person name="Kobayashi Y."/>
        </authorList>
    </citation>
    <scope>NUCLEOTIDE SEQUENCE [GENOMIC DNA]</scope>
    <source>
        <strain>168 / JH642</strain>
    </source>
</reference>
<reference key="2">
    <citation type="journal article" date="1996" name="Microbiology">
        <title>Systematic sequencing of the 283 kb 210 degrees-232 degrees region of the Bacillus subtilis genome containing the skin element and many sporulation genes.</title>
        <authorList>
            <person name="Mizuno M."/>
            <person name="Masuda S."/>
            <person name="Takemaru K."/>
            <person name="Hosono S."/>
            <person name="Sato T."/>
            <person name="Takeuchi M."/>
            <person name="Kobayashi Y."/>
        </authorList>
    </citation>
    <scope>NUCLEOTIDE SEQUENCE [GENOMIC DNA]</scope>
    <source>
        <strain>168 / JH642</strain>
    </source>
</reference>
<reference key="3">
    <citation type="journal article" date="1997" name="Nature">
        <title>The complete genome sequence of the Gram-positive bacterium Bacillus subtilis.</title>
        <authorList>
            <person name="Kunst F."/>
            <person name="Ogasawara N."/>
            <person name="Moszer I."/>
            <person name="Albertini A.M."/>
            <person name="Alloni G."/>
            <person name="Azevedo V."/>
            <person name="Bertero M.G."/>
            <person name="Bessieres P."/>
            <person name="Bolotin A."/>
            <person name="Borchert S."/>
            <person name="Borriss R."/>
            <person name="Boursier L."/>
            <person name="Brans A."/>
            <person name="Braun M."/>
            <person name="Brignell S.C."/>
            <person name="Bron S."/>
            <person name="Brouillet S."/>
            <person name="Bruschi C.V."/>
            <person name="Caldwell B."/>
            <person name="Capuano V."/>
            <person name="Carter N.M."/>
            <person name="Choi S.-K."/>
            <person name="Codani J.-J."/>
            <person name="Connerton I.F."/>
            <person name="Cummings N.J."/>
            <person name="Daniel R.A."/>
            <person name="Denizot F."/>
            <person name="Devine K.M."/>
            <person name="Duesterhoeft A."/>
            <person name="Ehrlich S.D."/>
            <person name="Emmerson P.T."/>
            <person name="Entian K.-D."/>
            <person name="Errington J."/>
            <person name="Fabret C."/>
            <person name="Ferrari E."/>
            <person name="Foulger D."/>
            <person name="Fritz C."/>
            <person name="Fujita M."/>
            <person name="Fujita Y."/>
            <person name="Fuma S."/>
            <person name="Galizzi A."/>
            <person name="Galleron N."/>
            <person name="Ghim S.-Y."/>
            <person name="Glaser P."/>
            <person name="Goffeau A."/>
            <person name="Golightly E.J."/>
            <person name="Grandi G."/>
            <person name="Guiseppi G."/>
            <person name="Guy B.J."/>
            <person name="Haga K."/>
            <person name="Haiech J."/>
            <person name="Harwood C.R."/>
            <person name="Henaut A."/>
            <person name="Hilbert H."/>
            <person name="Holsappel S."/>
            <person name="Hosono S."/>
            <person name="Hullo M.-F."/>
            <person name="Itaya M."/>
            <person name="Jones L.-M."/>
            <person name="Joris B."/>
            <person name="Karamata D."/>
            <person name="Kasahara Y."/>
            <person name="Klaerr-Blanchard M."/>
            <person name="Klein C."/>
            <person name="Kobayashi Y."/>
            <person name="Koetter P."/>
            <person name="Koningstein G."/>
            <person name="Krogh S."/>
            <person name="Kumano M."/>
            <person name="Kurita K."/>
            <person name="Lapidus A."/>
            <person name="Lardinois S."/>
            <person name="Lauber J."/>
            <person name="Lazarevic V."/>
            <person name="Lee S.-M."/>
            <person name="Levine A."/>
            <person name="Liu H."/>
            <person name="Masuda S."/>
            <person name="Mauel C."/>
            <person name="Medigue C."/>
            <person name="Medina N."/>
            <person name="Mellado R.P."/>
            <person name="Mizuno M."/>
            <person name="Moestl D."/>
            <person name="Nakai S."/>
            <person name="Noback M."/>
            <person name="Noone D."/>
            <person name="O'Reilly M."/>
            <person name="Ogawa K."/>
            <person name="Ogiwara A."/>
            <person name="Oudega B."/>
            <person name="Park S.-H."/>
            <person name="Parro V."/>
            <person name="Pohl T.M."/>
            <person name="Portetelle D."/>
            <person name="Porwollik S."/>
            <person name="Prescott A.M."/>
            <person name="Presecan E."/>
            <person name="Pujic P."/>
            <person name="Purnelle B."/>
            <person name="Rapoport G."/>
            <person name="Rey M."/>
            <person name="Reynolds S."/>
            <person name="Rieger M."/>
            <person name="Rivolta C."/>
            <person name="Rocha E."/>
            <person name="Roche B."/>
            <person name="Rose M."/>
            <person name="Sadaie Y."/>
            <person name="Sato T."/>
            <person name="Scanlan E."/>
            <person name="Schleich S."/>
            <person name="Schroeter R."/>
            <person name="Scoffone F."/>
            <person name="Sekiguchi J."/>
            <person name="Sekowska A."/>
            <person name="Seror S.J."/>
            <person name="Serror P."/>
            <person name="Shin B.-S."/>
            <person name="Soldo B."/>
            <person name="Sorokin A."/>
            <person name="Tacconi E."/>
            <person name="Takagi T."/>
            <person name="Takahashi H."/>
            <person name="Takemaru K."/>
            <person name="Takeuchi M."/>
            <person name="Tamakoshi A."/>
            <person name="Tanaka T."/>
            <person name="Terpstra P."/>
            <person name="Tognoni A."/>
            <person name="Tosato V."/>
            <person name="Uchiyama S."/>
            <person name="Vandenbol M."/>
            <person name="Vannier F."/>
            <person name="Vassarotti A."/>
            <person name="Viari A."/>
            <person name="Wambutt R."/>
            <person name="Wedler E."/>
            <person name="Wedler H."/>
            <person name="Weitzenegger T."/>
            <person name="Winters P."/>
            <person name="Wipat A."/>
            <person name="Yamamoto H."/>
            <person name="Yamane K."/>
            <person name="Yasumoto K."/>
            <person name="Yata K."/>
            <person name="Yoshida K."/>
            <person name="Yoshikawa H.-F."/>
            <person name="Zumstein E."/>
            <person name="Yoshikawa H."/>
            <person name="Danchin A."/>
        </authorList>
    </citation>
    <scope>NUCLEOTIDE SEQUENCE [LARGE SCALE GENOMIC DNA]</scope>
    <source>
        <strain>168</strain>
    </source>
</reference>
<reference key="4">
    <citation type="journal article" date="1988" name="J. Bacteriol.">
        <title>Transcriptional regulation and structure of the Bacillus subtilis sporulation locus spoIIIC.</title>
        <authorList>
            <person name="Errington J."/>
            <person name="Rong S."/>
            <person name="Rosenkrantz M.S."/>
            <person name="Sonenshein A.L."/>
        </authorList>
    </citation>
    <scope>NUCLEOTIDE SEQUENCE [GENOMIC DNA] OF 47-172</scope>
</reference>
<reference key="5">
    <citation type="journal article" date="1995" name="Gene">
        <title>Analysis of a Bacillus subtilis genome fragment using a co-operative computer system prototype.</title>
        <authorList>
            <person name="Medigue C."/>
            <person name="Moszer I."/>
            <person name="Viari A."/>
            <person name="Danchin A."/>
        </authorList>
    </citation>
    <scope>IDENTIFICATION</scope>
</reference>
<sequence length="172" mass="20646">MRYTNSHLEDWIENLYKKIDITEPEQINFERIAEALDIRLSFKPVTSFALKHSGIYNICLDSRKSRTEQWYDFAHEFCHIYRHEGDKKTMPATWTDYLDWQSNYFTYHFCIPTCMLRNINLPYIQSHAIENVAWLFKVSPSFAKKRLSIYYRKLTQHLFSQTVTGNLCPPFL</sequence>
<accession>P45899</accession>
<name>YQAB_BACSU</name>
<proteinExistence type="predicted"/>
<gene>
    <name type="primary">yqaB</name>
    <name type="ordered locus">BSU26380</name>
</gene>
<organism>
    <name type="scientific">Bacillus subtilis (strain 168)</name>
    <dbReference type="NCBI Taxonomy" id="224308"/>
    <lineage>
        <taxon>Bacteria</taxon>
        <taxon>Bacillati</taxon>
        <taxon>Bacillota</taxon>
        <taxon>Bacilli</taxon>
        <taxon>Bacillales</taxon>
        <taxon>Bacillaceae</taxon>
        <taxon>Bacillus</taxon>
    </lineage>
</organism>